<sequence length="359" mass="41063">MKPSIYSLTRDELIAWAVERGQKQFRATQIWDWLYKKRVQSFEEMTNISKDFVPILNDSFCVNPLKQRVVQESADGTVKYLFELPDGMLIETVLMRQHYGHSVCVTTQVGCNIGCTFCASGLIKKQRDLNSGEITAQIMLVQKYFDDRKQGERVSHVVVMGIGEPFDNYKNVMCFLRVINDDNGLAIGARHITVSTSGLAHKIRDFANEGVQVNLAVSLHAPNNDLRSSIMRVNRSFPLEKLFSAIEYYIEKTNRRVTFEYIMLNEVNDSIKQAQELADLTKTIRKLSYVNLIPYNPVSEHDQYSRSPKERVLAFYDVLKKNGVNCVVRQEHGTDIDAACGQLRSKTMKKDREKVTATK</sequence>
<comment type="function">
    <text evidence="1">Specifically methylates position 2 of adenine 2503 in 23S rRNA and position 2 of adenine 37 in tRNAs.</text>
</comment>
<comment type="catalytic activity">
    <reaction evidence="1">
        <text>adenosine(2503) in 23S rRNA + 2 reduced [2Fe-2S]-[ferredoxin] + 2 S-adenosyl-L-methionine = 2-methyladenosine(2503) in 23S rRNA + 5'-deoxyadenosine + L-methionine + 2 oxidized [2Fe-2S]-[ferredoxin] + S-adenosyl-L-homocysteine</text>
        <dbReference type="Rhea" id="RHEA:42916"/>
        <dbReference type="Rhea" id="RHEA-COMP:10000"/>
        <dbReference type="Rhea" id="RHEA-COMP:10001"/>
        <dbReference type="Rhea" id="RHEA-COMP:10152"/>
        <dbReference type="Rhea" id="RHEA-COMP:10282"/>
        <dbReference type="ChEBI" id="CHEBI:17319"/>
        <dbReference type="ChEBI" id="CHEBI:33737"/>
        <dbReference type="ChEBI" id="CHEBI:33738"/>
        <dbReference type="ChEBI" id="CHEBI:57844"/>
        <dbReference type="ChEBI" id="CHEBI:57856"/>
        <dbReference type="ChEBI" id="CHEBI:59789"/>
        <dbReference type="ChEBI" id="CHEBI:74411"/>
        <dbReference type="ChEBI" id="CHEBI:74497"/>
        <dbReference type="EC" id="2.1.1.192"/>
    </reaction>
</comment>
<comment type="catalytic activity">
    <reaction evidence="1">
        <text>adenosine(37) in tRNA + 2 reduced [2Fe-2S]-[ferredoxin] + 2 S-adenosyl-L-methionine = 2-methyladenosine(37) in tRNA + 5'-deoxyadenosine + L-methionine + 2 oxidized [2Fe-2S]-[ferredoxin] + S-adenosyl-L-homocysteine</text>
        <dbReference type="Rhea" id="RHEA:43332"/>
        <dbReference type="Rhea" id="RHEA-COMP:10000"/>
        <dbReference type="Rhea" id="RHEA-COMP:10001"/>
        <dbReference type="Rhea" id="RHEA-COMP:10162"/>
        <dbReference type="Rhea" id="RHEA-COMP:10485"/>
        <dbReference type="ChEBI" id="CHEBI:17319"/>
        <dbReference type="ChEBI" id="CHEBI:33737"/>
        <dbReference type="ChEBI" id="CHEBI:33738"/>
        <dbReference type="ChEBI" id="CHEBI:57844"/>
        <dbReference type="ChEBI" id="CHEBI:57856"/>
        <dbReference type="ChEBI" id="CHEBI:59789"/>
        <dbReference type="ChEBI" id="CHEBI:74411"/>
        <dbReference type="ChEBI" id="CHEBI:74497"/>
        <dbReference type="EC" id="2.1.1.192"/>
    </reaction>
</comment>
<comment type="cofactor">
    <cofactor evidence="1">
        <name>[4Fe-4S] cluster</name>
        <dbReference type="ChEBI" id="CHEBI:49883"/>
    </cofactor>
    <text evidence="1">Binds 1 [4Fe-4S] cluster. The cluster is coordinated with 3 cysteines and an exchangeable S-adenosyl-L-methionine.</text>
</comment>
<comment type="subcellular location">
    <subcellularLocation>
        <location evidence="1">Cytoplasm</location>
    </subcellularLocation>
</comment>
<comment type="miscellaneous">
    <text evidence="1">Reaction proceeds by a ping-pong mechanism involving intermediate methylation of a conserved cysteine residue.</text>
</comment>
<comment type="similarity">
    <text evidence="1">Belongs to the radical SAM superfamily. RlmN family.</text>
</comment>
<dbReference type="EC" id="2.1.1.192" evidence="1"/>
<dbReference type="EMBL" id="AE009949">
    <property type="protein sequence ID" value="AAL98117.1"/>
    <property type="molecule type" value="Genomic_DNA"/>
</dbReference>
<dbReference type="RefSeq" id="WP_011018008.1">
    <property type="nucleotide sequence ID" value="NC_003485.1"/>
</dbReference>
<dbReference type="SMR" id="Q8P058"/>
<dbReference type="KEGG" id="spm:spyM18_1550"/>
<dbReference type="HOGENOM" id="CLU_029101_0_1_9"/>
<dbReference type="GO" id="GO:0005737">
    <property type="term" value="C:cytoplasm"/>
    <property type="evidence" value="ECO:0007669"/>
    <property type="project" value="UniProtKB-SubCell"/>
</dbReference>
<dbReference type="GO" id="GO:0051539">
    <property type="term" value="F:4 iron, 4 sulfur cluster binding"/>
    <property type="evidence" value="ECO:0007669"/>
    <property type="project" value="UniProtKB-UniRule"/>
</dbReference>
<dbReference type="GO" id="GO:0046872">
    <property type="term" value="F:metal ion binding"/>
    <property type="evidence" value="ECO:0007669"/>
    <property type="project" value="UniProtKB-KW"/>
</dbReference>
<dbReference type="GO" id="GO:0070040">
    <property type="term" value="F:rRNA (adenine(2503)-C2-)-methyltransferase activity"/>
    <property type="evidence" value="ECO:0007669"/>
    <property type="project" value="UniProtKB-UniRule"/>
</dbReference>
<dbReference type="GO" id="GO:0019843">
    <property type="term" value="F:rRNA binding"/>
    <property type="evidence" value="ECO:0007669"/>
    <property type="project" value="UniProtKB-UniRule"/>
</dbReference>
<dbReference type="GO" id="GO:0002935">
    <property type="term" value="F:tRNA (adenine(37)-C2)-methyltransferase activity"/>
    <property type="evidence" value="ECO:0007669"/>
    <property type="project" value="UniProtKB-UniRule"/>
</dbReference>
<dbReference type="GO" id="GO:0000049">
    <property type="term" value="F:tRNA binding"/>
    <property type="evidence" value="ECO:0007669"/>
    <property type="project" value="UniProtKB-UniRule"/>
</dbReference>
<dbReference type="GO" id="GO:0070475">
    <property type="term" value="P:rRNA base methylation"/>
    <property type="evidence" value="ECO:0007669"/>
    <property type="project" value="UniProtKB-UniRule"/>
</dbReference>
<dbReference type="GO" id="GO:0030488">
    <property type="term" value="P:tRNA methylation"/>
    <property type="evidence" value="ECO:0007669"/>
    <property type="project" value="UniProtKB-UniRule"/>
</dbReference>
<dbReference type="CDD" id="cd01335">
    <property type="entry name" value="Radical_SAM"/>
    <property type="match status" value="1"/>
</dbReference>
<dbReference type="FunFam" id="3.20.20.70:FF:000014">
    <property type="entry name" value="Probable dual-specificity RNA methyltransferase RlmN"/>
    <property type="match status" value="1"/>
</dbReference>
<dbReference type="Gene3D" id="1.10.150.530">
    <property type="match status" value="1"/>
</dbReference>
<dbReference type="Gene3D" id="3.20.20.70">
    <property type="entry name" value="Aldolase class I"/>
    <property type="match status" value="1"/>
</dbReference>
<dbReference type="HAMAP" id="MF_01849">
    <property type="entry name" value="RNA_methyltr_RlmN"/>
    <property type="match status" value="1"/>
</dbReference>
<dbReference type="InterPro" id="IPR013785">
    <property type="entry name" value="Aldolase_TIM"/>
</dbReference>
<dbReference type="InterPro" id="IPR040072">
    <property type="entry name" value="Methyltransferase_A"/>
</dbReference>
<dbReference type="InterPro" id="IPR048641">
    <property type="entry name" value="RlmN_N"/>
</dbReference>
<dbReference type="InterPro" id="IPR027492">
    <property type="entry name" value="RNA_MTrfase_RlmN"/>
</dbReference>
<dbReference type="InterPro" id="IPR004383">
    <property type="entry name" value="rRNA_lsu_MTrfase_RlmN/Cfr"/>
</dbReference>
<dbReference type="InterPro" id="IPR007197">
    <property type="entry name" value="rSAM"/>
</dbReference>
<dbReference type="NCBIfam" id="TIGR00048">
    <property type="entry name" value="rRNA_mod_RlmN"/>
    <property type="match status" value="1"/>
</dbReference>
<dbReference type="PANTHER" id="PTHR30544">
    <property type="entry name" value="23S RRNA METHYLTRANSFERASE"/>
    <property type="match status" value="1"/>
</dbReference>
<dbReference type="PANTHER" id="PTHR30544:SF5">
    <property type="entry name" value="RADICAL SAM CORE DOMAIN-CONTAINING PROTEIN"/>
    <property type="match status" value="1"/>
</dbReference>
<dbReference type="Pfam" id="PF04055">
    <property type="entry name" value="Radical_SAM"/>
    <property type="match status" value="1"/>
</dbReference>
<dbReference type="Pfam" id="PF21016">
    <property type="entry name" value="RlmN_N"/>
    <property type="match status" value="1"/>
</dbReference>
<dbReference type="PIRSF" id="PIRSF006004">
    <property type="entry name" value="CHP00048"/>
    <property type="match status" value="1"/>
</dbReference>
<dbReference type="SFLD" id="SFLDF00275">
    <property type="entry name" value="adenosine_C2_methyltransferase"/>
    <property type="match status" value="1"/>
</dbReference>
<dbReference type="SFLD" id="SFLDS00029">
    <property type="entry name" value="Radical_SAM"/>
    <property type="match status" value="1"/>
</dbReference>
<dbReference type="SUPFAM" id="SSF102114">
    <property type="entry name" value="Radical SAM enzymes"/>
    <property type="match status" value="1"/>
</dbReference>
<dbReference type="PROSITE" id="PS51918">
    <property type="entry name" value="RADICAL_SAM"/>
    <property type="match status" value="1"/>
</dbReference>
<reference key="1">
    <citation type="journal article" date="2002" name="Proc. Natl. Acad. Sci. U.S.A.">
        <title>Genome sequence and comparative microarray analysis of serotype M18 group A Streptococcus strains associated with acute rheumatic fever outbreaks.</title>
        <authorList>
            <person name="Smoot J.C."/>
            <person name="Barbian K.D."/>
            <person name="Van Gompel J.J."/>
            <person name="Smoot L.M."/>
            <person name="Chaussee M.S."/>
            <person name="Sylva G.L."/>
            <person name="Sturdevant D.E."/>
            <person name="Ricklefs S.M."/>
            <person name="Porcella S.F."/>
            <person name="Parkins L.D."/>
            <person name="Beres S.B."/>
            <person name="Campbell D.S."/>
            <person name="Smith T.M."/>
            <person name="Zhang Q."/>
            <person name="Kapur V."/>
            <person name="Daly J.A."/>
            <person name="Veasy L.G."/>
            <person name="Musser J.M."/>
        </authorList>
    </citation>
    <scope>NUCLEOTIDE SEQUENCE [LARGE SCALE GENOMIC DNA]</scope>
    <source>
        <strain>MGAS8232</strain>
    </source>
</reference>
<proteinExistence type="inferred from homology"/>
<protein>
    <recommendedName>
        <fullName evidence="1">Probable dual-specificity RNA methyltransferase RlmN</fullName>
        <ecNumber evidence="1">2.1.1.192</ecNumber>
    </recommendedName>
    <alternativeName>
        <fullName evidence="1">23S rRNA (adenine(2503)-C(2))-methyltransferase</fullName>
    </alternativeName>
    <alternativeName>
        <fullName evidence="1">23S rRNA m2A2503 methyltransferase</fullName>
    </alternativeName>
    <alternativeName>
        <fullName evidence="1">Ribosomal RNA large subunit methyltransferase N</fullName>
    </alternativeName>
    <alternativeName>
        <fullName evidence="1">tRNA (adenine(37)-C(2))-methyltransferase</fullName>
    </alternativeName>
    <alternativeName>
        <fullName evidence="1">tRNA m2A37 methyltransferase</fullName>
    </alternativeName>
</protein>
<feature type="chain" id="PRO_0000350461" description="Probable dual-specificity RNA methyltransferase RlmN">
    <location>
        <begin position="1"/>
        <end position="359"/>
    </location>
</feature>
<feature type="domain" description="Radical SAM core" evidence="2">
    <location>
        <begin position="97"/>
        <end position="329"/>
    </location>
</feature>
<feature type="active site" description="Proton acceptor" evidence="1">
    <location>
        <position position="91"/>
    </location>
</feature>
<feature type="active site" description="S-methylcysteine intermediate" evidence="1">
    <location>
        <position position="340"/>
    </location>
</feature>
<feature type="binding site" evidence="1">
    <location>
        <position position="111"/>
    </location>
    <ligand>
        <name>[4Fe-4S] cluster</name>
        <dbReference type="ChEBI" id="CHEBI:49883"/>
        <note>4Fe-4S-S-AdoMet</note>
    </ligand>
</feature>
<feature type="binding site" evidence="1">
    <location>
        <position position="115"/>
    </location>
    <ligand>
        <name>[4Fe-4S] cluster</name>
        <dbReference type="ChEBI" id="CHEBI:49883"/>
        <note>4Fe-4S-S-AdoMet</note>
    </ligand>
</feature>
<feature type="binding site" evidence="1">
    <location>
        <position position="118"/>
    </location>
    <ligand>
        <name>[4Fe-4S] cluster</name>
        <dbReference type="ChEBI" id="CHEBI:49883"/>
        <note>4Fe-4S-S-AdoMet</note>
    </ligand>
</feature>
<feature type="binding site" evidence="1">
    <location>
        <begin position="163"/>
        <end position="164"/>
    </location>
    <ligand>
        <name>S-adenosyl-L-methionine</name>
        <dbReference type="ChEBI" id="CHEBI:59789"/>
    </ligand>
</feature>
<feature type="binding site" evidence="1">
    <location>
        <position position="195"/>
    </location>
    <ligand>
        <name>S-adenosyl-L-methionine</name>
        <dbReference type="ChEBI" id="CHEBI:59789"/>
    </ligand>
</feature>
<feature type="binding site" evidence="1">
    <location>
        <begin position="218"/>
        <end position="220"/>
    </location>
    <ligand>
        <name>S-adenosyl-L-methionine</name>
        <dbReference type="ChEBI" id="CHEBI:59789"/>
    </ligand>
</feature>
<feature type="binding site" evidence="1">
    <location>
        <position position="296"/>
    </location>
    <ligand>
        <name>S-adenosyl-L-methionine</name>
        <dbReference type="ChEBI" id="CHEBI:59789"/>
    </ligand>
</feature>
<feature type="disulfide bond" description="(transient)" evidence="1">
    <location>
        <begin position="104"/>
        <end position="340"/>
    </location>
</feature>
<name>RLMN_STRP8</name>
<organism>
    <name type="scientific">Streptococcus pyogenes serotype M18 (strain MGAS8232)</name>
    <dbReference type="NCBI Taxonomy" id="186103"/>
    <lineage>
        <taxon>Bacteria</taxon>
        <taxon>Bacillati</taxon>
        <taxon>Bacillota</taxon>
        <taxon>Bacilli</taxon>
        <taxon>Lactobacillales</taxon>
        <taxon>Streptococcaceae</taxon>
        <taxon>Streptococcus</taxon>
    </lineage>
</organism>
<accession>Q8P058</accession>
<evidence type="ECO:0000255" key="1">
    <source>
        <dbReference type="HAMAP-Rule" id="MF_01849"/>
    </source>
</evidence>
<evidence type="ECO:0000255" key="2">
    <source>
        <dbReference type="PROSITE-ProRule" id="PRU01266"/>
    </source>
</evidence>
<gene>
    <name evidence="1" type="primary">rlmN</name>
    <name type="ordered locus">spyM18_1550</name>
</gene>
<keyword id="KW-0004">4Fe-4S</keyword>
<keyword id="KW-0963">Cytoplasm</keyword>
<keyword id="KW-1015">Disulfide bond</keyword>
<keyword id="KW-0408">Iron</keyword>
<keyword id="KW-0411">Iron-sulfur</keyword>
<keyword id="KW-0479">Metal-binding</keyword>
<keyword id="KW-0489">Methyltransferase</keyword>
<keyword id="KW-0698">rRNA processing</keyword>
<keyword id="KW-0949">S-adenosyl-L-methionine</keyword>
<keyword id="KW-0808">Transferase</keyword>
<keyword id="KW-0819">tRNA processing</keyword>